<keyword id="KW-0210">Decarboxylase</keyword>
<keyword id="KW-0456">Lyase</keyword>
<keyword id="KW-0665">Pyrimidine biosynthesis</keyword>
<evidence type="ECO:0000255" key="1">
    <source>
        <dbReference type="HAMAP-Rule" id="MF_01200"/>
    </source>
</evidence>
<proteinExistence type="inferred from homology"/>
<gene>
    <name evidence="1" type="primary">pyrF</name>
    <name type="ordered locus">YpAngola_A2236</name>
</gene>
<name>PYRF_YERPG</name>
<sequence length="245" mass="26207">MTSATKTNNSGSISSPIVVALDYANKDAALAFADQVSPQDCRLKVGKEMFTLYGPELIRDLHQRGFDVFLDLKFHDIPNTTARAVAAAAELGVWMVNVHASGGARMMSAAKEALLPYGAQAPLLIAVTVLTSMDGEDLRDIGITISPAEQAERLAKLTWDCGLDGVVCSAHEAVRLKQVCGEDFSLVTPGIRPQGSEAGDQRRIMTPEQAVAVGVDYMVIGRPITQSPDPEKTLREILASLTKVA</sequence>
<dbReference type="EC" id="4.1.1.23" evidence="1"/>
<dbReference type="EMBL" id="CP000901">
    <property type="protein sequence ID" value="ABX86589.1"/>
    <property type="molecule type" value="Genomic_DNA"/>
</dbReference>
<dbReference type="RefSeq" id="WP_002210613.1">
    <property type="nucleotide sequence ID" value="NZ_CP009935.1"/>
</dbReference>
<dbReference type="SMR" id="A9R8T1"/>
<dbReference type="GeneID" id="57976441"/>
<dbReference type="KEGG" id="ypg:YpAngola_A2236"/>
<dbReference type="PATRIC" id="fig|349746.12.peg.3240"/>
<dbReference type="UniPathway" id="UPA00070">
    <property type="reaction ID" value="UER00120"/>
</dbReference>
<dbReference type="GO" id="GO:0005829">
    <property type="term" value="C:cytosol"/>
    <property type="evidence" value="ECO:0007669"/>
    <property type="project" value="TreeGrafter"/>
</dbReference>
<dbReference type="GO" id="GO:0004590">
    <property type="term" value="F:orotidine-5'-phosphate decarboxylase activity"/>
    <property type="evidence" value="ECO:0007669"/>
    <property type="project" value="UniProtKB-UniRule"/>
</dbReference>
<dbReference type="GO" id="GO:0006207">
    <property type="term" value="P:'de novo' pyrimidine nucleobase biosynthetic process"/>
    <property type="evidence" value="ECO:0007669"/>
    <property type="project" value="InterPro"/>
</dbReference>
<dbReference type="GO" id="GO:0044205">
    <property type="term" value="P:'de novo' UMP biosynthetic process"/>
    <property type="evidence" value="ECO:0007669"/>
    <property type="project" value="UniProtKB-UniRule"/>
</dbReference>
<dbReference type="CDD" id="cd04725">
    <property type="entry name" value="OMP_decarboxylase_like"/>
    <property type="match status" value="1"/>
</dbReference>
<dbReference type="FunFam" id="3.20.20.70:FF:000015">
    <property type="entry name" value="Orotidine 5'-phosphate decarboxylase"/>
    <property type="match status" value="1"/>
</dbReference>
<dbReference type="Gene3D" id="3.20.20.70">
    <property type="entry name" value="Aldolase class I"/>
    <property type="match status" value="1"/>
</dbReference>
<dbReference type="HAMAP" id="MF_01200_B">
    <property type="entry name" value="OMPdecase_type1_B"/>
    <property type="match status" value="1"/>
</dbReference>
<dbReference type="InterPro" id="IPR013785">
    <property type="entry name" value="Aldolase_TIM"/>
</dbReference>
<dbReference type="InterPro" id="IPR014732">
    <property type="entry name" value="OMPdecase"/>
</dbReference>
<dbReference type="InterPro" id="IPR018089">
    <property type="entry name" value="OMPdecase_AS"/>
</dbReference>
<dbReference type="InterPro" id="IPR047596">
    <property type="entry name" value="OMPdecase_bac"/>
</dbReference>
<dbReference type="InterPro" id="IPR001754">
    <property type="entry name" value="OMPdeCOase_dom"/>
</dbReference>
<dbReference type="InterPro" id="IPR011060">
    <property type="entry name" value="RibuloseP-bd_barrel"/>
</dbReference>
<dbReference type="NCBIfam" id="NF001273">
    <property type="entry name" value="PRK00230.1"/>
    <property type="match status" value="1"/>
</dbReference>
<dbReference type="NCBIfam" id="TIGR01740">
    <property type="entry name" value="pyrF"/>
    <property type="match status" value="1"/>
</dbReference>
<dbReference type="PANTHER" id="PTHR32119">
    <property type="entry name" value="OROTIDINE 5'-PHOSPHATE DECARBOXYLASE"/>
    <property type="match status" value="1"/>
</dbReference>
<dbReference type="PANTHER" id="PTHR32119:SF2">
    <property type="entry name" value="OROTIDINE 5'-PHOSPHATE DECARBOXYLASE"/>
    <property type="match status" value="1"/>
</dbReference>
<dbReference type="Pfam" id="PF00215">
    <property type="entry name" value="OMPdecase"/>
    <property type="match status" value="1"/>
</dbReference>
<dbReference type="SMART" id="SM00934">
    <property type="entry name" value="OMPdecase"/>
    <property type="match status" value="1"/>
</dbReference>
<dbReference type="SUPFAM" id="SSF51366">
    <property type="entry name" value="Ribulose-phoshate binding barrel"/>
    <property type="match status" value="1"/>
</dbReference>
<dbReference type="PROSITE" id="PS00156">
    <property type="entry name" value="OMPDECASE"/>
    <property type="match status" value="1"/>
</dbReference>
<protein>
    <recommendedName>
        <fullName evidence="1">Orotidine 5'-phosphate decarboxylase</fullName>
        <ecNumber evidence="1">4.1.1.23</ecNumber>
    </recommendedName>
    <alternativeName>
        <fullName evidence="1">OMP decarboxylase</fullName>
        <shortName evidence="1">OMPDCase</shortName>
        <shortName evidence="1">OMPdecase</shortName>
    </alternativeName>
</protein>
<reference key="1">
    <citation type="journal article" date="2010" name="J. Bacteriol.">
        <title>Genome sequence of the deep-rooted Yersinia pestis strain Angola reveals new insights into the evolution and pangenome of the plague bacterium.</title>
        <authorList>
            <person name="Eppinger M."/>
            <person name="Worsham P.L."/>
            <person name="Nikolich M.P."/>
            <person name="Riley D.R."/>
            <person name="Sebastian Y."/>
            <person name="Mou S."/>
            <person name="Achtman M."/>
            <person name="Lindler L.E."/>
            <person name="Ravel J."/>
        </authorList>
    </citation>
    <scope>NUCLEOTIDE SEQUENCE [LARGE SCALE GENOMIC DNA]</scope>
    <source>
        <strain>Angola</strain>
    </source>
</reference>
<accession>A9R8T1</accession>
<organism>
    <name type="scientific">Yersinia pestis bv. Antiqua (strain Angola)</name>
    <dbReference type="NCBI Taxonomy" id="349746"/>
    <lineage>
        <taxon>Bacteria</taxon>
        <taxon>Pseudomonadati</taxon>
        <taxon>Pseudomonadota</taxon>
        <taxon>Gammaproteobacteria</taxon>
        <taxon>Enterobacterales</taxon>
        <taxon>Yersiniaceae</taxon>
        <taxon>Yersinia</taxon>
    </lineage>
</organism>
<feature type="chain" id="PRO_1000138575" description="Orotidine 5'-phosphate decarboxylase">
    <location>
        <begin position="1"/>
        <end position="245"/>
    </location>
</feature>
<feature type="active site" description="Proton donor" evidence="1">
    <location>
        <position position="73"/>
    </location>
</feature>
<feature type="binding site" evidence="1">
    <location>
        <position position="22"/>
    </location>
    <ligand>
        <name>substrate</name>
    </ligand>
</feature>
<feature type="binding site" evidence="1">
    <location>
        <position position="44"/>
    </location>
    <ligand>
        <name>substrate</name>
    </ligand>
</feature>
<feature type="binding site" evidence="1">
    <location>
        <begin position="71"/>
        <end position="80"/>
    </location>
    <ligand>
        <name>substrate</name>
    </ligand>
</feature>
<feature type="binding site" evidence="1">
    <location>
        <position position="131"/>
    </location>
    <ligand>
        <name>substrate</name>
    </ligand>
</feature>
<feature type="binding site" evidence="1">
    <location>
        <position position="192"/>
    </location>
    <ligand>
        <name>substrate</name>
    </ligand>
</feature>
<feature type="binding site" evidence="1">
    <location>
        <position position="201"/>
    </location>
    <ligand>
        <name>substrate</name>
    </ligand>
</feature>
<feature type="binding site" evidence="1">
    <location>
        <position position="221"/>
    </location>
    <ligand>
        <name>substrate</name>
    </ligand>
</feature>
<feature type="binding site" evidence="1">
    <location>
        <position position="222"/>
    </location>
    <ligand>
        <name>substrate</name>
    </ligand>
</feature>
<comment type="function">
    <text evidence="1">Catalyzes the decarboxylation of orotidine 5'-monophosphate (OMP) to uridine 5'-monophosphate (UMP).</text>
</comment>
<comment type="catalytic activity">
    <reaction evidence="1">
        <text>orotidine 5'-phosphate + H(+) = UMP + CO2</text>
        <dbReference type="Rhea" id="RHEA:11596"/>
        <dbReference type="ChEBI" id="CHEBI:15378"/>
        <dbReference type="ChEBI" id="CHEBI:16526"/>
        <dbReference type="ChEBI" id="CHEBI:57538"/>
        <dbReference type="ChEBI" id="CHEBI:57865"/>
        <dbReference type="EC" id="4.1.1.23"/>
    </reaction>
</comment>
<comment type="pathway">
    <text evidence="1">Pyrimidine metabolism; UMP biosynthesis via de novo pathway; UMP from orotate: step 2/2.</text>
</comment>
<comment type="subunit">
    <text evidence="1">Homodimer.</text>
</comment>
<comment type="similarity">
    <text evidence="1">Belongs to the OMP decarboxylase family. Type 1 subfamily.</text>
</comment>